<comment type="function">
    <text evidence="3">Acts as a component of the MCM2-7 complex (MCM complex) which is the replicative helicase essential for 'once per cell cycle' DNA replication initiation and elongation in eukaryotic cells. Core component of CDC45-MCM-GINS (CMG) helicase, the molecular machine that unwinds template DNA during replication, and around which the replisome is built. The active ATPase sites in the MCM2-7 ring are formed through the interaction surfaces of two neighboring subunits such that a critical structure of a conserved arginine finger motif is provided in trans relative to the ATP-binding site of the Walker A box of the adjacent subunit. The six ATPase active sites, however, are likely to contribute differentially to the complex helicase activity.</text>
</comment>
<comment type="catalytic activity">
    <reaction evidence="2">
        <text>ATP + H2O = ADP + phosphate + H(+)</text>
        <dbReference type="Rhea" id="RHEA:13065"/>
        <dbReference type="ChEBI" id="CHEBI:15377"/>
        <dbReference type="ChEBI" id="CHEBI:15378"/>
        <dbReference type="ChEBI" id="CHEBI:30616"/>
        <dbReference type="ChEBI" id="CHEBI:43474"/>
        <dbReference type="ChEBI" id="CHEBI:456216"/>
        <dbReference type="EC" id="3.6.4.12"/>
    </reaction>
    <physiologicalReaction direction="left-to-right" evidence="2">
        <dbReference type="Rhea" id="RHEA:13066"/>
    </physiologicalReaction>
</comment>
<comment type="subunit">
    <text>Component of the mcm2-7 complex. The complex forms a toroidal hexameric ring with the proposed subunit order mcm2-mcm6-mcm4-mcm7-mcm3-mcm5 (By simililarity).</text>
</comment>
<comment type="subcellular location">
    <subcellularLocation>
        <location evidence="4">Nucleus</location>
    </subcellularLocation>
</comment>
<comment type="miscellaneous">
    <text evidence="2">Early fractionation of eukaryotic MCM proteins yielded a variety of dimeric, trimeric and tetrameric complexes with unclear biological significance. Specifically a MCM467 subcomplex is shown to have in vitro helicase activity which is inhibited by the MCM2 subunit. The MCM2-7 hexamer is the proposed physiological active complex.</text>
</comment>
<comment type="similarity">
    <text evidence="4">Belongs to the MCM family.</text>
</comment>
<protein>
    <recommendedName>
        <fullName>DNA replication licensing factor mcm-6</fullName>
        <ecNumber evidence="2">3.6.4.12</ecNumber>
    </recommendedName>
</protein>
<keyword id="KW-0067">ATP-binding</keyword>
<keyword id="KW-0131">Cell cycle</keyword>
<keyword id="KW-0235">DNA replication</keyword>
<keyword id="KW-0238">DNA-binding</keyword>
<keyword id="KW-0347">Helicase</keyword>
<keyword id="KW-0378">Hydrolase</keyword>
<keyword id="KW-0547">Nucleotide-binding</keyword>
<keyword id="KW-0539">Nucleus</keyword>
<keyword id="KW-1185">Reference proteome</keyword>
<reference key="1">
    <citation type="journal article" date="2003" name="PLoS Biol.">
        <title>The genome sequence of Caenorhabditis briggsae: a platform for comparative genomics.</title>
        <authorList>
            <person name="Stein L.D."/>
            <person name="Bao Z."/>
            <person name="Blasiar D."/>
            <person name="Blumenthal T."/>
            <person name="Brent M.R."/>
            <person name="Chen N."/>
            <person name="Chinwalla A."/>
            <person name="Clarke L."/>
            <person name="Clee C."/>
            <person name="Coghlan A."/>
            <person name="Coulson A."/>
            <person name="D'Eustachio P."/>
            <person name="Fitch D.H.A."/>
            <person name="Fulton L.A."/>
            <person name="Fulton R.E."/>
            <person name="Griffiths-Jones S."/>
            <person name="Harris T.W."/>
            <person name="Hillier L.W."/>
            <person name="Kamath R."/>
            <person name="Kuwabara P.E."/>
            <person name="Mardis E.R."/>
            <person name="Marra M.A."/>
            <person name="Miner T.L."/>
            <person name="Minx P."/>
            <person name="Mullikin J.C."/>
            <person name="Plumb R.W."/>
            <person name="Rogers J."/>
            <person name="Schein J.E."/>
            <person name="Sohrmann M."/>
            <person name="Spieth J."/>
            <person name="Stajich J.E."/>
            <person name="Wei C."/>
            <person name="Willey D."/>
            <person name="Wilson R.K."/>
            <person name="Durbin R.M."/>
            <person name="Waterston R.H."/>
        </authorList>
    </citation>
    <scope>NUCLEOTIDE SEQUENCE [LARGE SCALE GENOMIC DNA]</scope>
    <source>
        <strain>AF16</strain>
    </source>
</reference>
<dbReference type="EC" id="3.6.4.12" evidence="2"/>
<dbReference type="EMBL" id="HE601459">
    <property type="protein sequence ID" value="CAP29514.1"/>
    <property type="molecule type" value="Genomic_DNA"/>
</dbReference>
<dbReference type="SMR" id="Q61J08"/>
<dbReference type="FunCoup" id="Q61J08">
    <property type="interactions" value="2189"/>
</dbReference>
<dbReference type="STRING" id="6238.Q61J08"/>
<dbReference type="EnsemblMetazoa" id="CBG09994.1">
    <property type="protein sequence ID" value="CBG09994.1"/>
    <property type="gene ID" value="WBGene00031483"/>
</dbReference>
<dbReference type="KEGG" id="cbr:CBG_09994"/>
<dbReference type="CTD" id="8583659"/>
<dbReference type="WormBase" id="CBG09994">
    <property type="protein sequence ID" value="CBP02437"/>
    <property type="gene ID" value="WBGene00031483"/>
    <property type="gene designation" value="Cbr-mcm-6"/>
</dbReference>
<dbReference type="eggNOG" id="KOG0480">
    <property type="taxonomic scope" value="Eukaryota"/>
</dbReference>
<dbReference type="HOGENOM" id="CLU_000995_3_2_1"/>
<dbReference type="InParanoid" id="Q61J08"/>
<dbReference type="OMA" id="RHQQTDK"/>
<dbReference type="OrthoDB" id="1744952at2759"/>
<dbReference type="Proteomes" id="UP000008549">
    <property type="component" value="Unassembled WGS sequence"/>
</dbReference>
<dbReference type="GO" id="GO:0042555">
    <property type="term" value="C:MCM complex"/>
    <property type="evidence" value="ECO:0000250"/>
    <property type="project" value="UniProtKB"/>
</dbReference>
<dbReference type="GO" id="GO:0005634">
    <property type="term" value="C:nucleus"/>
    <property type="evidence" value="ECO:0000318"/>
    <property type="project" value="GO_Central"/>
</dbReference>
<dbReference type="GO" id="GO:0005524">
    <property type="term" value="F:ATP binding"/>
    <property type="evidence" value="ECO:0007669"/>
    <property type="project" value="UniProtKB-KW"/>
</dbReference>
<dbReference type="GO" id="GO:0016887">
    <property type="term" value="F:ATP hydrolysis activity"/>
    <property type="evidence" value="ECO:0007669"/>
    <property type="project" value="RHEA"/>
</dbReference>
<dbReference type="GO" id="GO:0003678">
    <property type="term" value="F:DNA helicase activity"/>
    <property type="evidence" value="ECO:0007669"/>
    <property type="project" value="InterPro"/>
</dbReference>
<dbReference type="GO" id="GO:0003697">
    <property type="term" value="F:single-stranded DNA binding"/>
    <property type="evidence" value="ECO:0000318"/>
    <property type="project" value="GO_Central"/>
</dbReference>
<dbReference type="GO" id="GO:0006260">
    <property type="term" value="P:DNA replication"/>
    <property type="evidence" value="ECO:0000318"/>
    <property type="project" value="GO_Central"/>
</dbReference>
<dbReference type="GO" id="GO:0006270">
    <property type="term" value="P:DNA replication initiation"/>
    <property type="evidence" value="ECO:0007669"/>
    <property type="project" value="InterPro"/>
</dbReference>
<dbReference type="GO" id="GO:0000727">
    <property type="term" value="P:double-strand break repair via break-induced replication"/>
    <property type="evidence" value="ECO:0000318"/>
    <property type="project" value="GO_Central"/>
</dbReference>
<dbReference type="GO" id="GO:1902969">
    <property type="term" value="P:mitotic DNA replication"/>
    <property type="evidence" value="ECO:0000318"/>
    <property type="project" value="GO_Central"/>
</dbReference>
<dbReference type="CDD" id="cd17757">
    <property type="entry name" value="MCM6"/>
    <property type="match status" value="1"/>
</dbReference>
<dbReference type="FunFam" id="1.20.58.870:FF:000002">
    <property type="entry name" value="DNA helicase"/>
    <property type="match status" value="1"/>
</dbReference>
<dbReference type="FunFam" id="2.20.28.10:FF:000003">
    <property type="entry name" value="DNA helicase"/>
    <property type="match status" value="1"/>
</dbReference>
<dbReference type="FunFam" id="2.40.50.140:FF:000091">
    <property type="entry name" value="DNA helicase"/>
    <property type="match status" value="1"/>
</dbReference>
<dbReference type="FunFam" id="3.30.1640.10:FF:000004">
    <property type="entry name" value="DNA helicase"/>
    <property type="match status" value="1"/>
</dbReference>
<dbReference type="FunFam" id="3.40.50.300:FF:000115">
    <property type="entry name" value="DNA helicase"/>
    <property type="match status" value="1"/>
</dbReference>
<dbReference type="Gene3D" id="1.20.58.870">
    <property type="match status" value="1"/>
</dbReference>
<dbReference type="Gene3D" id="2.20.28.10">
    <property type="match status" value="1"/>
</dbReference>
<dbReference type="Gene3D" id="3.30.1640.10">
    <property type="entry name" value="mini-chromosome maintenance (MCM) complex, chain A, domain 1"/>
    <property type="match status" value="1"/>
</dbReference>
<dbReference type="Gene3D" id="2.40.50.140">
    <property type="entry name" value="Nucleic acid-binding proteins"/>
    <property type="match status" value="1"/>
</dbReference>
<dbReference type="Gene3D" id="3.40.50.300">
    <property type="entry name" value="P-loop containing nucleotide triphosphate hydrolases"/>
    <property type="match status" value="1"/>
</dbReference>
<dbReference type="InterPro" id="IPR031327">
    <property type="entry name" value="MCM"/>
</dbReference>
<dbReference type="InterPro" id="IPR008049">
    <property type="entry name" value="MCM6"/>
</dbReference>
<dbReference type="InterPro" id="IPR041024">
    <property type="entry name" value="Mcm6_C"/>
</dbReference>
<dbReference type="InterPro" id="IPR018525">
    <property type="entry name" value="MCM_CS"/>
</dbReference>
<dbReference type="InterPro" id="IPR001208">
    <property type="entry name" value="MCM_dom"/>
</dbReference>
<dbReference type="InterPro" id="IPR041562">
    <property type="entry name" value="MCM_lid"/>
</dbReference>
<dbReference type="InterPro" id="IPR027925">
    <property type="entry name" value="MCM_N"/>
</dbReference>
<dbReference type="InterPro" id="IPR033762">
    <property type="entry name" value="MCM_OB"/>
</dbReference>
<dbReference type="InterPro" id="IPR012340">
    <property type="entry name" value="NA-bd_OB-fold"/>
</dbReference>
<dbReference type="InterPro" id="IPR027417">
    <property type="entry name" value="P-loop_NTPase"/>
</dbReference>
<dbReference type="PANTHER" id="PTHR11630">
    <property type="entry name" value="DNA REPLICATION LICENSING FACTOR MCM FAMILY MEMBER"/>
    <property type="match status" value="1"/>
</dbReference>
<dbReference type="PANTHER" id="PTHR11630:SF43">
    <property type="entry name" value="DNA REPLICATION LICENSING FACTOR MCM6"/>
    <property type="match status" value="1"/>
</dbReference>
<dbReference type="Pfam" id="PF00493">
    <property type="entry name" value="MCM"/>
    <property type="match status" value="1"/>
</dbReference>
<dbReference type="Pfam" id="PF18263">
    <property type="entry name" value="MCM6_C"/>
    <property type="match status" value="1"/>
</dbReference>
<dbReference type="Pfam" id="PF17855">
    <property type="entry name" value="MCM_lid"/>
    <property type="match status" value="1"/>
</dbReference>
<dbReference type="Pfam" id="PF14551">
    <property type="entry name" value="MCM_N"/>
    <property type="match status" value="1"/>
</dbReference>
<dbReference type="Pfam" id="PF17207">
    <property type="entry name" value="MCM_OB"/>
    <property type="match status" value="1"/>
</dbReference>
<dbReference type="PRINTS" id="PR01657">
    <property type="entry name" value="MCMFAMILY"/>
</dbReference>
<dbReference type="PRINTS" id="PR01662">
    <property type="entry name" value="MCMPROTEIN6"/>
</dbReference>
<dbReference type="SMART" id="SM00350">
    <property type="entry name" value="MCM"/>
    <property type="match status" value="1"/>
</dbReference>
<dbReference type="SUPFAM" id="SSF50249">
    <property type="entry name" value="Nucleic acid-binding proteins"/>
    <property type="match status" value="1"/>
</dbReference>
<dbReference type="SUPFAM" id="SSF52540">
    <property type="entry name" value="P-loop containing nucleoside triphosphate hydrolases"/>
    <property type="match status" value="1"/>
</dbReference>
<dbReference type="PROSITE" id="PS00847">
    <property type="entry name" value="MCM_1"/>
    <property type="match status" value="1"/>
</dbReference>
<dbReference type="PROSITE" id="PS50051">
    <property type="entry name" value="MCM_2"/>
    <property type="match status" value="1"/>
</dbReference>
<gene>
    <name evidence="1" type="primary">mcm-6</name>
    <name type="ORF">CBG09994</name>
</gene>
<organism>
    <name type="scientific">Caenorhabditis briggsae</name>
    <dbReference type="NCBI Taxonomy" id="6238"/>
    <lineage>
        <taxon>Eukaryota</taxon>
        <taxon>Metazoa</taxon>
        <taxon>Ecdysozoa</taxon>
        <taxon>Nematoda</taxon>
        <taxon>Chromadorea</taxon>
        <taxon>Rhabditida</taxon>
        <taxon>Rhabditina</taxon>
        <taxon>Rhabditomorpha</taxon>
        <taxon>Rhabditoidea</taxon>
        <taxon>Rhabditidae</taxon>
        <taxon>Peloderinae</taxon>
        <taxon>Caenorhabditis</taxon>
    </lineage>
</organism>
<accession>Q61J08</accession>
<accession>A8XA47</accession>
<evidence type="ECO:0000250" key="1">
    <source>
        <dbReference type="UniProtKB" id="P34647"/>
    </source>
</evidence>
<evidence type="ECO:0000250" key="2">
    <source>
        <dbReference type="UniProtKB" id="P97311"/>
    </source>
</evidence>
<evidence type="ECO:0000250" key="3">
    <source>
        <dbReference type="UniProtKB" id="Q14566"/>
    </source>
</evidence>
<evidence type="ECO:0000255" key="4"/>
<evidence type="ECO:0000256" key="5">
    <source>
        <dbReference type="SAM" id="MobiDB-lite"/>
    </source>
</evidence>
<name>MCM6_CAEBR</name>
<feature type="chain" id="PRO_0000232398" description="DNA replication licensing factor mcm-6">
    <location>
        <begin position="1"/>
        <end position="810"/>
    </location>
</feature>
<feature type="domain" description="MCM" evidence="4">
    <location>
        <begin position="346"/>
        <end position="553"/>
    </location>
</feature>
<feature type="region of interest" description="Disordered" evidence="5">
    <location>
        <begin position="685"/>
        <end position="705"/>
    </location>
</feature>
<feature type="short sequence motif" description="Arginine finger">
    <location>
        <begin position="529"/>
        <end position="532"/>
    </location>
</feature>
<feature type="binding site" evidence="3">
    <location>
        <position position="400"/>
    </location>
    <ligand>
        <name>ATP</name>
        <dbReference type="ChEBI" id="CHEBI:30616"/>
        <note>ligand shared with MCM4</note>
    </ligand>
</feature>
<feature type="binding site" evidence="3">
    <location>
        <position position="401"/>
    </location>
    <ligand>
        <name>ATP</name>
        <dbReference type="ChEBI" id="CHEBI:30616"/>
        <note>ligand shared with MCM4</note>
    </ligand>
</feature>
<feature type="binding site" evidence="3">
    <location>
        <position position="402"/>
    </location>
    <ligand>
        <name>ATP</name>
        <dbReference type="ChEBI" id="CHEBI:30616"/>
        <note>ligand shared with MCM4</note>
    </ligand>
</feature>
<feature type="binding site" evidence="3">
    <location>
        <position position="403"/>
    </location>
    <ligand>
        <name>ATP</name>
        <dbReference type="ChEBI" id="CHEBI:30616"/>
        <note>ligand shared with MCM4</note>
    </ligand>
</feature>
<feature type="binding site" evidence="3">
    <location>
        <position position="404"/>
    </location>
    <ligand>
        <name>ATP</name>
        <dbReference type="ChEBI" id="CHEBI:30616"/>
        <note>ligand shared with MCM4</note>
    </ligand>
</feature>
<feature type="binding site" evidence="3">
    <location>
        <position position="505"/>
    </location>
    <ligand>
        <name>ATP</name>
        <dbReference type="ChEBI" id="CHEBI:30616"/>
        <note>ligand shared with MCM4</note>
    </ligand>
</feature>
<feature type="binding site" evidence="3">
    <location>
        <position position="622"/>
    </location>
    <ligand>
        <name>ADP</name>
        <dbReference type="ChEBI" id="CHEBI:456216"/>
        <note>ligand shared with MCM2</note>
    </ligand>
</feature>
<feature type="binding site" evidence="3">
    <location>
        <position position="625"/>
    </location>
    <ligand>
        <name>ADP</name>
        <dbReference type="ChEBI" id="CHEBI:456216"/>
        <note>ligand shared with MCM2</note>
    </ligand>
</feature>
<sequence>MDNIISGQAQKVEDVDGTRVQNEFSKFLKSFKGDKNELQYKTAMKELVQPEKNTIFVDMQHLYKFSNNLATTIELQYYRVYPFMCEALHLATLDGCDENERQQMFKKQLYVSLYNLDAKTKVRELSADKVGGLVRIAGQIVRTHPVHPELSRACFVCEDCGVSTRDVQQQFRYTQPTKCANPQCMNRTRFSLDVNSSTFVDFQKIRIQETQAELPRGSIPRTVDVIVRGEMVETVQPGDKCDIVGTLIVIPDIAQLSTPGLRAETSNQNRGRATDKSEGITGLKALGVRDLTYKMAFLACHIQQTESLVGGDASGAMEENDYLELWTKMSPEDRSVLKQMSDDKKIEKNIVDSLFPNIYGNHEVKLGVLLMLLGGVAKKSKDEGTSLRGDINVCLVGDPSTAKSQVLKAVEEFSPRAIYTSGKASSAAGLTAAVVKDEESFEFVIEAGALMLADNGVCCIDEFDKMDVKDQVAIHEAMEQQTISITKAGVKATLNARASILAAANPVGGRYDRSRPLKYNVQMSAPIMSRFDLFFVLVDECNEVTDYAIARRILDNHRSISEHTERNTVYKIDDIKKYIAFARCFKPKISDKAAEALVREYKKLRMSDSNNAATSSWRITVRQLESLVRLSEALARLHCGKEVLEQHVEKAAELLNKSIVRVEQPDIALDEDDFDNNIVIVEANKENQGGDDDMEHDGEKDETAKVDPAKLKISFKEYKQLSDVLVLHMRADEESQGEEEYDGVKQSALVEWYLTTIEGEMETEEDFNVQKTVCERVIHRLVHQDHILLEVEPGEDPTLCVHPNYVVSDE</sequence>
<proteinExistence type="inferred from homology"/>